<dbReference type="EC" id="1.11.1.24" evidence="3"/>
<dbReference type="EMBL" id="D63917">
    <property type="protein sequence ID" value="BAA09947.1"/>
    <property type="molecule type" value="mRNA"/>
</dbReference>
<dbReference type="EMBL" id="AY336994">
    <property type="protein sequence ID" value="AAQ01200.1"/>
    <property type="molecule type" value="mRNA"/>
</dbReference>
<dbReference type="EMBL" id="AP005292">
    <property type="protein sequence ID" value="BAC45197.1"/>
    <property type="molecule type" value="Genomic_DNA"/>
</dbReference>
<dbReference type="EMBL" id="AP008213">
    <property type="protein sequence ID" value="BAF22321.1"/>
    <property type="molecule type" value="Genomic_DNA"/>
</dbReference>
<dbReference type="EMBL" id="AP014963">
    <property type="protein sequence ID" value="BAT02838.1"/>
    <property type="molecule type" value="Genomic_DNA"/>
</dbReference>
<dbReference type="EMBL" id="CM000144">
    <property type="status" value="NOT_ANNOTATED_CDS"/>
    <property type="molecule type" value="Genomic_DNA"/>
</dbReference>
<dbReference type="PIR" id="T03967">
    <property type="entry name" value="T03967"/>
</dbReference>
<dbReference type="RefSeq" id="XP_015645300.1">
    <property type="nucleotide sequence ID" value="XM_015789814.1"/>
</dbReference>
<dbReference type="SMR" id="P0C5C9"/>
<dbReference type="FunCoup" id="P0C5C9">
    <property type="interactions" value="1315"/>
</dbReference>
<dbReference type="STRING" id="39947.P0C5C9"/>
<dbReference type="Allergome" id="9884">
    <property type="allergen name" value="Ory s 32"/>
</dbReference>
<dbReference type="PeroxiBase" id="4023">
    <property type="entry name" value="Os1CysPrx01"/>
</dbReference>
<dbReference type="PaxDb" id="39947-P0C5C9"/>
<dbReference type="EnsemblPlants" id="Os07t0638300-01">
    <property type="protein sequence ID" value="Os07t0638300-01"/>
    <property type="gene ID" value="Os07g0638300"/>
</dbReference>
<dbReference type="Gramene" id="Os07t0638300-01">
    <property type="protein sequence ID" value="Os07t0638300-01"/>
    <property type="gene ID" value="Os07g0638300"/>
</dbReference>
<dbReference type="KEGG" id="dosa:Os07g0638300"/>
<dbReference type="eggNOG" id="KOG0854">
    <property type="taxonomic scope" value="Eukaryota"/>
</dbReference>
<dbReference type="HOGENOM" id="CLU_042529_4_1_1"/>
<dbReference type="InParanoid" id="P0C5C9"/>
<dbReference type="OMA" id="HGPMNIP"/>
<dbReference type="OrthoDB" id="2996783at2759"/>
<dbReference type="Proteomes" id="UP000000763">
    <property type="component" value="Chromosome 7"/>
</dbReference>
<dbReference type="Proteomes" id="UP000007752">
    <property type="component" value="Chromosome 7"/>
</dbReference>
<dbReference type="Proteomes" id="UP000059680">
    <property type="component" value="Chromosome 7"/>
</dbReference>
<dbReference type="ExpressionAtlas" id="P0C5C9">
    <property type="expression patterns" value="baseline and differential"/>
</dbReference>
<dbReference type="GO" id="GO:0005829">
    <property type="term" value="C:cytosol"/>
    <property type="evidence" value="ECO:0000318"/>
    <property type="project" value="GO_Central"/>
</dbReference>
<dbReference type="GO" id="GO:0005634">
    <property type="term" value="C:nucleus"/>
    <property type="evidence" value="ECO:0007669"/>
    <property type="project" value="UniProtKB-SubCell"/>
</dbReference>
<dbReference type="GO" id="GO:0004601">
    <property type="term" value="F:peroxidase activity"/>
    <property type="evidence" value="ECO:0000318"/>
    <property type="project" value="GO_Central"/>
</dbReference>
<dbReference type="GO" id="GO:0140824">
    <property type="term" value="F:thioredoxin-dependent peroxiredoxin activity"/>
    <property type="evidence" value="ECO:0007669"/>
    <property type="project" value="UniProtKB-EC"/>
</dbReference>
<dbReference type="GO" id="GO:0045454">
    <property type="term" value="P:cell redox homeostasis"/>
    <property type="evidence" value="ECO:0000318"/>
    <property type="project" value="GO_Central"/>
</dbReference>
<dbReference type="CDD" id="cd03016">
    <property type="entry name" value="PRX_1cys"/>
    <property type="match status" value="1"/>
</dbReference>
<dbReference type="FunFam" id="3.30.1020.10:FF:000001">
    <property type="entry name" value="1-Cys peroxiredoxin"/>
    <property type="match status" value="1"/>
</dbReference>
<dbReference type="FunFam" id="3.40.30.10:FF:000011">
    <property type="entry name" value="Peroxiredoxin PRX1"/>
    <property type="match status" value="1"/>
</dbReference>
<dbReference type="Gene3D" id="3.30.1020.10">
    <property type="entry name" value="Antioxidant, Horf6, Chain A, domain2"/>
    <property type="match status" value="1"/>
</dbReference>
<dbReference type="Gene3D" id="3.40.30.10">
    <property type="entry name" value="Glutaredoxin"/>
    <property type="match status" value="1"/>
</dbReference>
<dbReference type="InterPro" id="IPR000866">
    <property type="entry name" value="AhpC/TSA"/>
</dbReference>
<dbReference type="InterPro" id="IPR024706">
    <property type="entry name" value="Peroxiredoxin_AhpC-typ"/>
</dbReference>
<dbReference type="InterPro" id="IPR019479">
    <property type="entry name" value="Peroxiredoxin_C"/>
</dbReference>
<dbReference type="InterPro" id="IPR045020">
    <property type="entry name" value="PRX_1cys"/>
</dbReference>
<dbReference type="InterPro" id="IPR036249">
    <property type="entry name" value="Thioredoxin-like_sf"/>
</dbReference>
<dbReference type="InterPro" id="IPR013766">
    <property type="entry name" value="Thioredoxin_domain"/>
</dbReference>
<dbReference type="PANTHER" id="PTHR43503">
    <property type="entry name" value="MCG48959-RELATED"/>
    <property type="match status" value="1"/>
</dbReference>
<dbReference type="PANTHER" id="PTHR43503:SF4">
    <property type="entry name" value="PEROXIREDOXIN-6"/>
    <property type="match status" value="1"/>
</dbReference>
<dbReference type="Pfam" id="PF10417">
    <property type="entry name" value="1-cysPrx_C"/>
    <property type="match status" value="1"/>
</dbReference>
<dbReference type="Pfam" id="PF00578">
    <property type="entry name" value="AhpC-TSA"/>
    <property type="match status" value="1"/>
</dbReference>
<dbReference type="PIRSF" id="PIRSF000239">
    <property type="entry name" value="AHPC"/>
    <property type="match status" value="1"/>
</dbReference>
<dbReference type="SUPFAM" id="SSF52833">
    <property type="entry name" value="Thioredoxin-like"/>
    <property type="match status" value="1"/>
</dbReference>
<dbReference type="PROSITE" id="PS51352">
    <property type="entry name" value="THIOREDOXIN_2"/>
    <property type="match status" value="1"/>
</dbReference>
<name>REHYA_ORYSJ</name>
<keyword id="KW-0049">Antioxidant</keyword>
<keyword id="KW-0963">Cytoplasm</keyword>
<keyword id="KW-0539">Nucleus</keyword>
<keyword id="KW-0560">Oxidoreductase</keyword>
<keyword id="KW-0575">Peroxidase</keyword>
<keyword id="KW-0676">Redox-active center</keyword>
<keyword id="KW-1185">Reference proteome</keyword>
<keyword id="KW-0346">Stress response</keyword>
<evidence type="ECO:0000250" key="1">
    <source>
        <dbReference type="UniProtKB" id="O04005"/>
    </source>
</evidence>
<evidence type="ECO:0000250" key="2">
    <source>
        <dbReference type="UniProtKB" id="O35244"/>
    </source>
</evidence>
<evidence type="ECO:0000250" key="3">
    <source>
        <dbReference type="UniProtKB" id="P30041"/>
    </source>
</evidence>
<evidence type="ECO:0000255" key="4"/>
<evidence type="ECO:0000255" key="5">
    <source>
        <dbReference type="PROSITE-ProRule" id="PRU00691"/>
    </source>
</evidence>
<evidence type="ECO:0000269" key="6">
    <source>
    </source>
</evidence>
<evidence type="ECO:0000305" key="7"/>
<protein>
    <recommendedName>
        <fullName>1-Cys peroxiredoxin A</fullName>
        <shortName>1-Cys Prx A</shortName>
        <ecNumber evidence="3">1.11.1.24</ecNumber>
    </recommendedName>
    <alternativeName>
        <fullName>Protein RAB24</fullName>
    </alternativeName>
    <alternativeName>
        <fullName>Rice 1Cys-peroxiredoxin</fullName>
        <shortName>R1C-Prx</shortName>
    </alternativeName>
    <alternativeName>
        <fullName>Thioredoxin peroxidase A</fullName>
    </alternativeName>
    <alternativeName>
        <fullName evidence="7">Thioredoxin-dependent peroxiredoxin A</fullName>
    </alternativeName>
</protein>
<accession>P0C5C9</accession>
<accession>A2YP41</accession>
<accession>A3BMM5</accession>
<accession>P52573</accession>
<accession>Q0D4A2</accession>
<accession>Q8GVH0</accession>
<sequence>MPGLTIGDTVPNLELDSTHGKIRIHDFVGDTYVILFSHPGDFTPVCTTELAAMAGYAKEFDKRGVKLLGISCDDVQSHKDWIKDIEAYKPGNRVTYPIMADPSREAIKQLNMVDPDEKDSNGGHLPSRALHIVGPDKKVKLSFLYPACVGRNMDEVVRAVDALQTAAKHAVATPVNWKPGERVVIPPGVSDDEAKEKFPQGFDTADLPSGKGYLRFTKVG</sequence>
<reference key="1">
    <citation type="submission" date="1995-10" db="EMBL/GenBank/DDBJ databases">
        <title>ABA-responsive 24kDa polypeptide from rice calli is related to the thiol-specific antioxidant family.</title>
        <authorList>
            <person name="Fujino K."/>
            <person name="Tanaka K."/>
            <person name="Xu Z."/>
            <person name="Kikuta Y."/>
        </authorList>
    </citation>
    <scope>NUCLEOTIDE SEQUENCE [MRNA]</scope>
    <source>
        <strain>cv. Yuhkara</strain>
    </source>
</reference>
<reference key="2">
    <citation type="submission" date="2003-07" db="EMBL/GenBank/DDBJ databases">
        <title>Identification a novel antioxidant enzyme from rice.</title>
        <authorList>
            <person name="Yao Q."/>
            <person name="Peng R."/>
            <person name="Xiong A."/>
        </authorList>
    </citation>
    <scope>NUCLEOTIDE SEQUENCE [MRNA]</scope>
</reference>
<reference key="3">
    <citation type="journal article" date="2005" name="Nature">
        <title>The map-based sequence of the rice genome.</title>
        <authorList>
            <consortium name="International rice genome sequencing project (IRGSP)"/>
        </authorList>
    </citation>
    <scope>NUCLEOTIDE SEQUENCE [LARGE SCALE GENOMIC DNA]</scope>
    <source>
        <strain>cv. Nipponbare</strain>
    </source>
</reference>
<reference key="4">
    <citation type="journal article" date="2008" name="Nucleic Acids Res.">
        <title>The rice annotation project database (RAP-DB): 2008 update.</title>
        <authorList>
            <consortium name="The rice annotation project (RAP)"/>
        </authorList>
    </citation>
    <scope>GENOME REANNOTATION</scope>
    <source>
        <strain>cv. Nipponbare</strain>
    </source>
</reference>
<reference key="5">
    <citation type="journal article" date="2013" name="Rice">
        <title>Improvement of the Oryza sativa Nipponbare reference genome using next generation sequence and optical map data.</title>
        <authorList>
            <person name="Kawahara Y."/>
            <person name="de la Bastide M."/>
            <person name="Hamilton J.P."/>
            <person name="Kanamori H."/>
            <person name="McCombie W.R."/>
            <person name="Ouyang S."/>
            <person name="Schwartz D.C."/>
            <person name="Tanaka T."/>
            <person name="Wu J."/>
            <person name="Zhou S."/>
            <person name="Childs K.L."/>
            <person name="Davidson R.M."/>
            <person name="Lin H."/>
            <person name="Quesada-Ocampo L."/>
            <person name="Vaillancourt B."/>
            <person name="Sakai H."/>
            <person name="Lee S.S."/>
            <person name="Kim J."/>
            <person name="Numa H."/>
            <person name="Itoh T."/>
            <person name="Buell C.R."/>
            <person name="Matsumoto T."/>
        </authorList>
    </citation>
    <scope>GENOME REANNOTATION</scope>
    <source>
        <strain>cv. Nipponbare</strain>
    </source>
</reference>
<reference key="6">
    <citation type="journal article" date="2005" name="PLoS Biol.">
        <title>The genomes of Oryza sativa: a history of duplications.</title>
        <authorList>
            <person name="Yu J."/>
            <person name="Wang J."/>
            <person name="Lin W."/>
            <person name="Li S."/>
            <person name="Li H."/>
            <person name="Zhou J."/>
            <person name="Ni P."/>
            <person name="Dong W."/>
            <person name="Hu S."/>
            <person name="Zeng C."/>
            <person name="Zhang J."/>
            <person name="Zhang Y."/>
            <person name="Li R."/>
            <person name="Xu Z."/>
            <person name="Li S."/>
            <person name="Li X."/>
            <person name="Zheng H."/>
            <person name="Cong L."/>
            <person name="Lin L."/>
            <person name="Yin J."/>
            <person name="Geng J."/>
            <person name="Li G."/>
            <person name="Shi J."/>
            <person name="Liu J."/>
            <person name="Lv H."/>
            <person name="Li J."/>
            <person name="Wang J."/>
            <person name="Deng Y."/>
            <person name="Ran L."/>
            <person name="Shi X."/>
            <person name="Wang X."/>
            <person name="Wu Q."/>
            <person name="Li C."/>
            <person name="Ren X."/>
            <person name="Wang J."/>
            <person name="Wang X."/>
            <person name="Li D."/>
            <person name="Liu D."/>
            <person name="Zhang X."/>
            <person name="Ji Z."/>
            <person name="Zhao W."/>
            <person name="Sun Y."/>
            <person name="Zhang Z."/>
            <person name="Bao J."/>
            <person name="Han Y."/>
            <person name="Dong L."/>
            <person name="Ji J."/>
            <person name="Chen P."/>
            <person name="Wu S."/>
            <person name="Liu J."/>
            <person name="Xiao Y."/>
            <person name="Bu D."/>
            <person name="Tan J."/>
            <person name="Yang L."/>
            <person name="Ye C."/>
            <person name="Zhang J."/>
            <person name="Xu J."/>
            <person name="Zhou Y."/>
            <person name="Yu Y."/>
            <person name="Zhang B."/>
            <person name="Zhuang S."/>
            <person name="Wei H."/>
            <person name="Liu B."/>
            <person name="Lei M."/>
            <person name="Yu H."/>
            <person name="Li Y."/>
            <person name="Xu H."/>
            <person name="Wei S."/>
            <person name="He X."/>
            <person name="Fang L."/>
            <person name="Zhang Z."/>
            <person name="Zhang Y."/>
            <person name="Huang X."/>
            <person name="Su Z."/>
            <person name="Tong W."/>
            <person name="Li J."/>
            <person name="Tong Z."/>
            <person name="Li S."/>
            <person name="Ye J."/>
            <person name="Wang L."/>
            <person name="Fang L."/>
            <person name="Lei T."/>
            <person name="Chen C.-S."/>
            <person name="Chen H.-C."/>
            <person name="Xu Z."/>
            <person name="Li H."/>
            <person name="Huang H."/>
            <person name="Zhang F."/>
            <person name="Xu H."/>
            <person name="Li N."/>
            <person name="Zhao C."/>
            <person name="Li S."/>
            <person name="Dong L."/>
            <person name="Huang Y."/>
            <person name="Li L."/>
            <person name="Xi Y."/>
            <person name="Qi Q."/>
            <person name="Li W."/>
            <person name="Zhang B."/>
            <person name="Hu W."/>
            <person name="Zhang Y."/>
            <person name="Tian X."/>
            <person name="Jiao Y."/>
            <person name="Liang X."/>
            <person name="Jin J."/>
            <person name="Gao L."/>
            <person name="Zheng W."/>
            <person name="Hao B."/>
            <person name="Liu S.-M."/>
            <person name="Wang W."/>
            <person name="Yuan L."/>
            <person name="Cao M."/>
            <person name="McDermott J."/>
            <person name="Samudrala R."/>
            <person name="Wang J."/>
            <person name="Wong G.K.-S."/>
            <person name="Yang H."/>
        </authorList>
    </citation>
    <scope>NUCLEOTIDE SEQUENCE [LARGE SCALE GENOMIC DNA]</scope>
    <source>
        <strain>cv. Nipponbare</strain>
    </source>
</reference>
<reference key="7">
    <citation type="journal article" date="2000" name="FEBS Lett.">
        <title>Rice 1Cys-peroxiredoxin over-expressed in transgenic tobacco does not maintain dormancy but enhances antioxidant activity.</title>
        <authorList>
            <person name="Lee K.O."/>
            <person name="Jang H.H."/>
            <person name="Jung B.G."/>
            <person name="Chi Y.H."/>
            <person name="Lee J.Y."/>
            <person name="Choi Y.O."/>
            <person name="Lee J.R."/>
            <person name="Lim C.O."/>
            <person name="Cho M.J."/>
            <person name="Lee S.Y."/>
        </authorList>
    </citation>
    <scope>FUNCTION</scope>
    <scope>INDUCTION</scope>
</reference>
<comment type="function">
    <text evidence="1 6">Thiol-specific peroxidase that catalyzes the reduction of hydrogen peroxide and organic hydroperoxides to water and alcohols, respectively (By similarity). Seems to contribute to the inhibition of germination during stress (PubMed:11113447).</text>
</comment>
<comment type="catalytic activity">
    <reaction evidence="3">
        <text>a hydroperoxide + [thioredoxin]-dithiol = an alcohol + [thioredoxin]-disulfide + H2O</text>
        <dbReference type="Rhea" id="RHEA:62620"/>
        <dbReference type="Rhea" id="RHEA-COMP:10698"/>
        <dbReference type="Rhea" id="RHEA-COMP:10700"/>
        <dbReference type="ChEBI" id="CHEBI:15377"/>
        <dbReference type="ChEBI" id="CHEBI:29950"/>
        <dbReference type="ChEBI" id="CHEBI:30879"/>
        <dbReference type="ChEBI" id="CHEBI:35924"/>
        <dbReference type="ChEBI" id="CHEBI:50058"/>
        <dbReference type="EC" id="1.11.1.24"/>
    </reaction>
</comment>
<comment type="subcellular location">
    <subcellularLocation>
        <location evidence="1">Nucleus</location>
    </subcellularLocation>
    <subcellularLocation>
        <location evidence="1">Cytoplasm</location>
    </subcellularLocation>
</comment>
<comment type="induction">
    <text evidence="6">By abscisic acid (ABA) and oxidative stress.</text>
</comment>
<comment type="miscellaneous">
    <text evidence="2">The active site is a conserved redox-active cysteine residue, the peroxidatic cysteine (C(P)), which makes the nucleophilic attack on the peroxide substrate. The peroxide oxidizes the C(P)-SH to cysteine sulfenic acid (C(P)-SOH), which then reacts with another cysteine residue, the resolving cysteine (C(R)), to form a disulfide bridge. The disulfide is subsequently reduced by an appropriate electron donor to complete the catalytic cycle. In this 1-Cys peroxiredoxin, no C(R) is present and C(P) instead forms a disulfide with a cysteine from another protein or with a small thiol molecule.</text>
</comment>
<comment type="similarity">
    <text evidence="7">Belongs to the peroxiredoxin family. Prx6 subfamily.</text>
</comment>
<organism>
    <name type="scientific">Oryza sativa subsp. japonica</name>
    <name type="common">Rice</name>
    <dbReference type="NCBI Taxonomy" id="39947"/>
    <lineage>
        <taxon>Eukaryota</taxon>
        <taxon>Viridiplantae</taxon>
        <taxon>Streptophyta</taxon>
        <taxon>Embryophyta</taxon>
        <taxon>Tracheophyta</taxon>
        <taxon>Spermatophyta</taxon>
        <taxon>Magnoliopsida</taxon>
        <taxon>Liliopsida</taxon>
        <taxon>Poales</taxon>
        <taxon>Poaceae</taxon>
        <taxon>BOP clade</taxon>
        <taxon>Oryzoideae</taxon>
        <taxon>Oryzeae</taxon>
        <taxon>Oryzinae</taxon>
        <taxon>Oryza</taxon>
        <taxon>Oryza sativa</taxon>
    </lineage>
</organism>
<proteinExistence type="evidence at transcript level"/>
<feature type="chain" id="PRO_0000135110" description="1-Cys peroxiredoxin A">
    <location>
        <begin position="1"/>
        <end position="220"/>
    </location>
</feature>
<feature type="domain" description="Thioredoxin" evidence="5">
    <location>
        <begin position="4"/>
        <end position="165"/>
    </location>
</feature>
<feature type="short sequence motif" description="Bipartite nuclear localization signal" evidence="4">
    <location>
        <begin position="195"/>
        <end position="218"/>
    </location>
</feature>
<feature type="active site" description="Cysteine sulfenic acid (-SOH) intermediate" evidence="3">
    <location>
        <position position="46"/>
    </location>
</feature>
<feature type="sequence conflict" description="In Ref. 1; BAA09947." evidence="7" ref="1">
    <original>G</original>
    <variation>A</variation>
    <location>
        <position position="55"/>
    </location>
</feature>
<feature type="sequence conflict" description="In Ref. 1; BAA09947." evidence="7" ref="1">
    <original>I</original>
    <variation>F</variation>
    <location>
        <position position="82"/>
    </location>
</feature>
<feature type="sequence conflict" description="In Ref. 1; BAA09947." evidence="7" ref="1">
    <original>HAV</original>
    <variation>TRL</variation>
    <location>
        <begin position="169"/>
        <end position="171"/>
    </location>
</feature>
<feature type="sequence conflict" description="In Ref. 1; BAA09947." evidence="7" ref="1">
    <original>RV</original>
    <variation>PF</variation>
    <location>
        <begin position="182"/>
        <end position="183"/>
    </location>
</feature>
<gene>
    <name type="ordered locus">Os07g0638300</name>
    <name type="ordered locus">LOC_Os07g44430</name>
    <name type="ORF">OJ1340_C08.107</name>
    <name type="ORF">OsJ_024297</name>
</gene>